<keyword id="KW-0010">Activator</keyword>
<keyword id="KW-0025">Alternative splicing</keyword>
<keyword id="KW-0160">Chromosomal rearrangement</keyword>
<keyword id="KW-0175">Coiled coil</keyword>
<keyword id="KW-0217">Developmental protein</keyword>
<keyword id="KW-0221">Differentiation</keyword>
<keyword id="KW-0325">Glycoprotein</keyword>
<keyword id="KW-1017">Isopeptide bond</keyword>
<keyword id="KW-0517">Myogenesis</keyword>
<keyword id="KW-0539">Nucleus</keyword>
<keyword id="KW-0597">Phosphoprotein</keyword>
<keyword id="KW-1267">Proteomics identification</keyword>
<keyword id="KW-1185">Reference proteome</keyword>
<keyword id="KW-0677">Repeat</keyword>
<keyword id="KW-0804">Transcription</keyword>
<keyword id="KW-0805">Transcription regulation</keyword>
<keyword id="KW-0832">Ubl conjugation</keyword>
<protein>
    <recommendedName>
        <fullName evidence="11">Myocardin-related transcription factor B</fullName>
        <shortName evidence="11">MRTF-B</shortName>
    </recommendedName>
    <alternativeName>
        <fullName>MKL/myocardin-like protein 2</fullName>
    </alternativeName>
    <alternativeName>
        <fullName evidence="8">Megakaryoblastic leukemia 2</fullName>
    </alternativeName>
</protein>
<sequence>MIDSSKKQQQGFPEILTAGDFEPLKEKECLEGSNQKSLKEVLQLRLQQRRTREQLVDQGIMPPLKSPAAFHEQIKSLERARTENFLKHKIRSRPDRSELVRMHILEETFAEPSLQATQMKLKRARLADDLNEKIAQRPGPMELVEKNILPVDSSVKEAIIGVGKEDYPHTQGDFSFDEDSSDALSPDQPASQESQGSAASPSEPKVSESPSPVTTNTPAQFASVSPTVPEFLKTPPTADQPPPRPAAPVLPTNTVSSAKPGPALVKQSHPKNPNDKHRSKKCKDPKPRVKKLKYHQYIPPDQKGEKNEPQMDSNYARLLQQQQLFLQLQILSQQKQHYNYQTILPAPFKPLNDKNSNSGNSALNNATPNTPRQNTSTPVRKPGPLPSSLDDLKVSELKTELKLRGLPVSGTKPDLIERLKPYQEVNSSGLAAGGIVAVSSSAIVTSNPEVTVALPVTTLHNTVTSSVSTLKAELPPTGTSNATRVENVHSPLPISPSPSEQSSLSTDDTNMADTFTEIMTMMSPSQFLSSSPLRMTNNEDSLSPTSSTLSNLELDAAEKDRKLQEKEKQIEELKRKLEQEQKLVEVLKMQLEVEKRGQQQRPLEAQPSAPGHSVKSDQKHGSLGSSIKDEASLPDCSSSRQPIPVASHAVGQPVSTGGQTLVAKKAVVIKQEVPVGQAEQQSVVSQFYVSSQGQPPPAVVAQPQALLTTQTAQLLLPVSIQGSSVTSVQLPVGSLKLQTSPQAGMQTQPQIATAAQIPTAALASGLAPTVPQTQDTFPQHVLSQPQQVRKVFTNSASSNTVLPYQRHPAPAVQQPFINKASNSVLQSRNAPLPSLQNGPNTPNKPSSPPPPQQFVVQHSLFGSPVAKTKDPPRYEEAIKQTRSTQAPLPEISNAHSQQMDDLFDILIKSGEISLPIKEEPSPISKMRPVTASITTMPVNTVVSRPPPQVQMAPPVSLEPMGSLSASLENQLEAFLDGTLPSANEIPPLQSSSEDREPFSLIEDLQNDLLSHSGMLDHSHSPMETSETQFAAGTPCLSLDLSDSNLDNMEWLDITMPNSSSGLTPLSTTAPSMFSADFLDPQDLPLPWD</sequence>
<proteinExistence type="evidence at protein level"/>
<name>MRTFB_HUMAN</name>
<gene>
    <name evidence="12" type="primary">MRTFB</name>
    <name type="synonym">KIAA1243</name>
    <name evidence="8" type="synonym">MKL2</name>
</gene>
<reference key="1">
    <citation type="journal article" date="2003" name="J. Biol. Chem.">
        <title>Megakaryoblastic leukemia-1/2, a transcriptional co-activator of serum response factor, is required for skeletal myogenic differentiation.</title>
        <authorList>
            <person name="Selvaraj A."/>
            <person name="Prywes R."/>
        </authorList>
    </citation>
    <scope>NUCLEOTIDE SEQUENCE [MRNA] (ISOFORM 4)</scope>
    <scope>FUNCTION</scope>
    <scope>TISSUE SPECIFICITY</scope>
    <scope>INTERACTION WITH MRTFA AND SRF</scope>
    <source>
        <tissue>Cervix carcinoma</tissue>
    </source>
</reference>
<reference key="2">
    <citation type="journal article" date="2004" name="Nat. Genet.">
        <title>Complete sequencing and characterization of 21,243 full-length human cDNAs.</title>
        <authorList>
            <person name="Ota T."/>
            <person name="Suzuki Y."/>
            <person name="Nishikawa T."/>
            <person name="Otsuki T."/>
            <person name="Sugiyama T."/>
            <person name="Irie R."/>
            <person name="Wakamatsu A."/>
            <person name="Hayashi K."/>
            <person name="Sato H."/>
            <person name="Nagai K."/>
            <person name="Kimura K."/>
            <person name="Makita H."/>
            <person name="Sekine M."/>
            <person name="Obayashi M."/>
            <person name="Nishi T."/>
            <person name="Shibahara T."/>
            <person name="Tanaka T."/>
            <person name="Ishii S."/>
            <person name="Yamamoto J."/>
            <person name="Saito K."/>
            <person name="Kawai Y."/>
            <person name="Isono Y."/>
            <person name="Nakamura Y."/>
            <person name="Nagahari K."/>
            <person name="Murakami K."/>
            <person name="Yasuda T."/>
            <person name="Iwayanagi T."/>
            <person name="Wagatsuma M."/>
            <person name="Shiratori A."/>
            <person name="Sudo H."/>
            <person name="Hosoiri T."/>
            <person name="Kaku Y."/>
            <person name="Kodaira H."/>
            <person name="Kondo H."/>
            <person name="Sugawara M."/>
            <person name="Takahashi M."/>
            <person name="Kanda K."/>
            <person name="Yokoi T."/>
            <person name="Furuya T."/>
            <person name="Kikkawa E."/>
            <person name="Omura Y."/>
            <person name="Abe K."/>
            <person name="Kamihara K."/>
            <person name="Katsuta N."/>
            <person name="Sato K."/>
            <person name="Tanikawa M."/>
            <person name="Yamazaki M."/>
            <person name="Ninomiya K."/>
            <person name="Ishibashi T."/>
            <person name="Yamashita H."/>
            <person name="Murakawa K."/>
            <person name="Fujimori K."/>
            <person name="Tanai H."/>
            <person name="Kimata M."/>
            <person name="Watanabe M."/>
            <person name="Hiraoka S."/>
            <person name="Chiba Y."/>
            <person name="Ishida S."/>
            <person name="Ono Y."/>
            <person name="Takiguchi S."/>
            <person name="Watanabe S."/>
            <person name="Yosida M."/>
            <person name="Hotuta T."/>
            <person name="Kusano J."/>
            <person name="Kanehori K."/>
            <person name="Takahashi-Fujii A."/>
            <person name="Hara H."/>
            <person name="Tanase T.-O."/>
            <person name="Nomura Y."/>
            <person name="Togiya S."/>
            <person name="Komai F."/>
            <person name="Hara R."/>
            <person name="Takeuchi K."/>
            <person name="Arita M."/>
            <person name="Imose N."/>
            <person name="Musashino K."/>
            <person name="Yuuki H."/>
            <person name="Oshima A."/>
            <person name="Sasaki N."/>
            <person name="Aotsuka S."/>
            <person name="Yoshikawa Y."/>
            <person name="Matsunawa H."/>
            <person name="Ichihara T."/>
            <person name="Shiohata N."/>
            <person name="Sano S."/>
            <person name="Moriya S."/>
            <person name="Momiyama H."/>
            <person name="Satoh N."/>
            <person name="Takami S."/>
            <person name="Terashima Y."/>
            <person name="Suzuki O."/>
            <person name="Nakagawa S."/>
            <person name="Senoh A."/>
            <person name="Mizoguchi H."/>
            <person name="Goto Y."/>
            <person name="Shimizu F."/>
            <person name="Wakebe H."/>
            <person name="Hishigaki H."/>
            <person name="Watanabe T."/>
            <person name="Sugiyama A."/>
            <person name="Takemoto M."/>
            <person name="Kawakami B."/>
            <person name="Yamazaki M."/>
            <person name="Watanabe K."/>
            <person name="Kumagai A."/>
            <person name="Itakura S."/>
            <person name="Fukuzumi Y."/>
            <person name="Fujimori Y."/>
            <person name="Komiyama M."/>
            <person name="Tashiro H."/>
            <person name="Tanigami A."/>
            <person name="Fujiwara T."/>
            <person name="Ono T."/>
            <person name="Yamada K."/>
            <person name="Fujii Y."/>
            <person name="Ozaki K."/>
            <person name="Hirao M."/>
            <person name="Ohmori Y."/>
            <person name="Kawabata A."/>
            <person name="Hikiji T."/>
            <person name="Kobatake N."/>
            <person name="Inagaki H."/>
            <person name="Ikema Y."/>
            <person name="Okamoto S."/>
            <person name="Okitani R."/>
            <person name="Kawakami T."/>
            <person name="Noguchi S."/>
            <person name="Itoh T."/>
            <person name="Shigeta K."/>
            <person name="Senba T."/>
            <person name="Matsumura K."/>
            <person name="Nakajima Y."/>
            <person name="Mizuno T."/>
            <person name="Morinaga M."/>
            <person name="Sasaki M."/>
            <person name="Togashi T."/>
            <person name="Oyama M."/>
            <person name="Hata H."/>
            <person name="Watanabe M."/>
            <person name="Komatsu T."/>
            <person name="Mizushima-Sugano J."/>
            <person name="Satoh T."/>
            <person name="Shirai Y."/>
            <person name="Takahashi Y."/>
            <person name="Nakagawa K."/>
            <person name="Okumura K."/>
            <person name="Nagase T."/>
            <person name="Nomura N."/>
            <person name="Kikuchi H."/>
            <person name="Masuho Y."/>
            <person name="Yamashita R."/>
            <person name="Nakai K."/>
            <person name="Yada T."/>
            <person name="Nakamura Y."/>
            <person name="Ohara O."/>
            <person name="Isogai T."/>
            <person name="Sugano S."/>
        </authorList>
    </citation>
    <scope>NUCLEOTIDE SEQUENCE [LARGE SCALE MRNA] (ISOFORMS 3 AND 5)</scope>
    <source>
        <tissue>Brain</tissue>
        <tissue>Thymus</tissue>
    </source>
</reference>
<reference key="3">
    <citation type="journal article" date="2004" name="Nature">
        <title>The sequence and analysis of duplication-rich human chromosome 16.</title>
        <authorList>
            <person name="Martin J."/>
            <person name="Han C."/>
            <person name="Gordon L.A."/>
            <person name="Terry A."/>
            <person name="Prabhakar S."/>
            <person name="She X."/>
            <person name="Xie G."/>
            <person name="Hellsten U."/>
            <person name="Chan Y.M."/>
            <person name="Altherr M."/>
            <person name="Couronne O."/>
            <person name="Aerts A."/>
            <person name="Bajorek E."/>
            <person name="Black S."/>
            <person name="Blumer H."/>
            <person name="Branscomb E."/>
            <person name="Brown N.C."/>
            <person name="Bruno W.J."/>
            <person name="Buckingham J.M."/>
            <person name="Callen D.F."/>
            <person name="Campbell C.S."/>
            <person name="Campbell M.L."/>
            <person name="Campbell E.W."/>
            <person name="Caoile C."/>
            <person name="Challacombe J.F."/>
            <person name="Chasteen L.A."/>
            <person name="Chertkov O."/>
            <person name="Chi H.C."/>
            <person name="Christensen M."/>
            <person name="Clark L.M."/>
            <person name="Cohn J.D."/>
            <person name="Denys M."/>
            <person name="Detter J.C."/>
            <person name="Dickson M."/>
            <person name="Dimitrijevic-Bussod M."/>
            <person name="Escobar J."/>
            <person name="Fawcett J.J."/>
            <person name="Flowers D."/>
            <person name="Fotopulos D."/>
            <person name="Glavina T."/>
            <person name="Gomez M."/>
            <person name="Gonzales E."/>
            <person name="Goodstein D."/>
            <person name="Goodwin L.A."/>
            <person name="Grady D.L."/>
            <person name="Grigoriev I."/>
            <person name="Groza M."/>
            <person name="Hammon N."/>
            <person name="Hawkins T."/>
            <person name="Haydu L."/>
            <person name="Hildebrand C.E."/>
            <person name="Huang W."/>
            <person name="Israni S."/>
            <person name="Jett J."/>
            <person name="Jewett P.B."/>
            <person name="Kadner K."/>
            <person name="Kimball H."/>
            <person name="Kobayashi A."/>
            <person name="Krawczyk M.-C."/>
            <person name="Leyba T."/>
            <person name="Longmire J.L."/>
            <person name="Lopez F."/>
            <person name="Lou Y."/>
            <person name="Lowry S."/>
            <person name="Ludeman T."/>
            <person name="Manohar C.F."/>
            <person name="Mark G.A."/>
            <person name="McMurray K.L."/>
            <person name="Meincke L.J."/>
            <person name="Morgan J."/>
            <person name="Moyzis R.K."/>
            <person name="Mundt M.O."/>
            <person name="Munk A.C."/>
            <person name="Nandkeshwar R.D."/>
            <person name="Pitluck S."/>
            <person name="Pollard M."/>
            <person name="Predki P."/>
            <person name="Parson-Quintana B."/>
            <person name="Ramirez L."/>
            <person name="Rash S."/>
            <person name="Retterer J."/>
            <person name="Ricke D.O."/>
            <person name="Robinson D.L."/>
            <person name="Rodriguez A."/>
            <person name="Salamov A."/>
            <person name="Saunders E.H."/>
            <person name="Scott D."/>
            <person name="Shough T."/>
            <person name="Stallings R.L."/>
            <person name="Stalvey M."/>
            <person name="Sutherland R.D."/>
            <person name="Tapia R."/>
            <person name="Tesmer J.G."/>
            <person name="Thayer N."/>
            <person name="Thompson L.S."/>
            <person name="Tice H."/>
            <person name="Torney D.C."/>
            <person name="Tran-Gyamfi M."/>
            <person name="Tsai M."/>
            <person name="Ulanovsky L.E."/>
            <person name="Ustaszewska A."/>
            <person name="Vo N."/>
            <person name="White P.S."/>
            <person name="Williams A.L."/>
            <person name="Wills P.L."/>
            <person name="Wu J.-R."/>
            <person name="Wu K."/>
            <person name="Yang J."/>
            <person name="DeJong P."/>
            <person name="Bruce D."/>
            <person name="Doggett N.A."/>
            <person name="Deaven L."/>
            <person name="Schmutz J."/>
            <person name="Grimwood J."/>
            <person name="Richardson P."/>
            <person name="Rokhsar D.S."/>
            <person name="Eichler E.E."/>
            <person name="Gilna P."/>
            <person name="Lucas S.M."/>
            <person name="Myers R.M."/>
            <person name="Rubin E.M."/>
            <person name="Pennacchio L.A."/>
        </authorList>
    </citation>
    <scope>NUCLEOTIDE SEQUENCE [LARGE SCALE GENOMIC DNA]</scope>
</reference>
<reference key="4">
    <citation type="submission" date="2005-09" db="EMBL/GenBank/DDBJ databases">
        <authorList>
            <person name="Mural R.J."/>
            <person name="Istrail S."/>
            <person name="Sutton G."/>
            <person name="Florea L."/>
            <person name="Halpern A.L."/>
            <person name="Mobarry C.M."/>
            <person name="Lippert R."/>
            <person name="Walenz B."/>
            <person name="Shatkay H."/>
            <person name="Dew I."/>
            <person name="Miller J.R."/>
            <person name="Flanigan M.J."/>
            <person name="Edwards N.J."/>
            <person name="Bolanos R."/>
            <person name="Fasulo D."/>
            <person name="Halldorsson B.V."/>
            <person name="Hannenhalli S."/>
            <person name="Turner R."/>
            <person name="Yooseph S."/>
            <person name="Lu F."/>
            <person name="Nusskern D.R."/>
            <person name="Shue B.C."/>
            <person name="Zheng X.H."/>
            <person name="Zhong F."/>
            <person name="Delcher A.L."/>
            <person name="Huson D.H."/>
            <person name="Kravitz S.A."/>
            <person name="Mouchard L."/>
            <person name="Reinert K."/>
            <person name="Remington K.A."/>
            <person name="Clark A.G."/>
            <person name="Waterman M.S."/>
            <person name="Eichler E.E."/>
            <person name="Adams M.D."/>
            <person name="Hunkapiller M.W."/>
            <person name="Myers E.W."/>
            <person name="Venter J.C."/>
        </authorList>
    </citation>
    <scope>NUCLEOTIDE SEQUENCE [LARGE SCALE GENOMIC DNA]</scope>
</reference>
<reference key="5">
    <citation type="journal article" date="2004" name="Genome Res.">
        <title>The status, quality, and expansion of the NIH full-length cDNA project: the Mammalian Gene Collection (MGC).</title>
        <authorList>
            <consortium name="The MGC Project Team"/>
        </authorList>
    </citation>
    <scope>NUCLEOTIDE SEQUENCE [LARGE SCALE MRNA] (ISOFORMS 2 AND 5)</scope>
    <source>
        <tissue>Brain</tissue>
        <tissue>Medulla oblongata</tissue>
        <tissue>Testis</tissue>
    </source>
</reference>
<reference key="6">
    <citation type="journal article" date="1999" name="DNA Res.">
        <title>Prediction of the coding sequences of unidentified human genes. XV. The complete sequences of 100 new cDNA clones from brain which code for large proteins in vitro.</title>
        <authorList>
            <person name="Nagase T."/>
            <person name="Ishikawa K."/>
            <person name="Kikuno R."/>
            <person name="Hirosawa M."/>
            <person name="Nomura N."/>
            <person name="Ohara O."/>
        </authorList>
    </citation>
    <scope>NUCLEOTIDE SEQUENCE [LARGE SCALE MRNA] OF 261-1088 (ISOFORM 1)</scope>
    <source>
        <tissue>Brain</tissue>
    </source>
</reference>
<reference key="7">
    <citation type="journal article" date="2002" name="DNA Res.">
        <title>Construction of expression-ready cDNA clones for KIAA genes: manual curation of 330 KIAA cDNA clones.</title>
        <authorList>
            <person name="Nakajima D."/>
            <person name="Okazaki N."/>
            <person name="Yamakawa H."/>
            <person name="Kikuno R."/>
            <person name="Ohara O."/>
            <person name="Nagase T."/>
        </authorList>
    </citation>
    <scope>SEQUENCE REVISION</scope>
</reference>
<reference key="8">
    <citation type="journal article" date="2007" name="BMC Genomics">
        <title>The full-ORF clone resource of the German cDNA consortium.</title>
        <authorList>
            <person name="Bechtel S."/>
            <person name="Rosenfelder H."/>
            <person name="Duda A."/>
            <person name="Schmidt C.P."/>
            <person name="Ernst U."/>
            <person name="Wellenreuther R."/>
            <person name="Mehrle A."/>
            <person name="Schuster C."/>
            <person name="Bahr A."/>
            <person name="Bloecker H."/>
            <person name="Heubner D."/>
            <person name="Hoerlein A."/>
            <person name="Michel G."/>
            <person name="Wedler H."/>
            <person name="Koehrer K."/>
            <person name="Ottenwaelder B."/>
            <person name="Poustka A."/>
            <person name="Wiemann S."/>
            <person name="Schupp I."/>
        </authorList>
    </citation>
    <scope>NUCLEOTIDE SEQUENCE [LARGE SCALE MRNA] OF 415-1088 (ISOFORM 1)</scope>
    <source>
        <tissue>Amygdala</tissue>
    </source>
</reference>
<reference key="9">
    <citation type="journal article" date="2008" name="Proc. Natl. Acad. Sci. U.S.A.">
        <title>A quantitative atlas of mitotic phosphorylation.</title>
        <authorList>
            <person name="Dephoure N."/>
            <person name="Zhou C."/>
            <person name="Villen J."/>
            <person name="Beausoleil S.A."/>
            <person name="Bakalarski C.E."/>
            <person name="Elledge S.J."/>
            <person name="Gygi S.P."/>
        </authorList>
    </citation>
    <scope>PHOSPHORYLATION [LARGE SCALE ANALYSIS] AT SER-66; THR-367; THR-370 AND SER-921</scope>
    <scope>IDENTIFICATION BY MASS SPECTROMETRY [LARGE SCALE ANALYSIS]</scope>
    <source>
        <tissue>Cervix carcinoma</tissue>
    </source>
</reference>
<reference key="10">
    <citation type="journal article" date="2009" name="Sci. Signal.">
        <title>Quantitative phosphoproteomic analysis of T cell receptor signaling reveals system-wide modulation of protein-protein interactions.</title>
        <authorList>
            <person name="Mayya V."/>
            <person name="Lundgren D.H."/>
            <person name="Hwang S.-I."/>
            <person name="Rezaul K."/>
            <person name="Wu L."/>
            <person name="Eng J.K."/>
            <person name="Rodionov V."/>
            <person name="Han D.K."/>
        </authorList>
    </citation>
    <scope>IDENTIFICATION BY MASS SPECTROMETRY [LARGE SCALE ANALYSIS]</scope>
    <source>
        <tissue>Leukemic T-cell</tissue>
    </source>
</reference>
<reference key="11">
    <citation type="journal article" date="2010" name="Genes Chromosomes Cancer">
        <title>C11orf95-MKL2 is the resulting fusion oncogene of t(11;16)(q13;p13) in chondroid lipoma.</title>
        <authorList>
            <person name="Huang D."/>
            <person name="Sumegi J."/>
            <person name="Dal Cin P."/>
            <person name="Reith J.D."/>
            <person name="Yasuda T."/>
            <person name="Nelson M."/>
            <person name="Muirhead D."/>
            <person name="Bridge J.A."/>
        </authorList>
    </citation>
    <scope>CHROMOSOMAL TRANSLOCATION WITH ZFTA</scope>
</reference>
<reference key="12">
    <citation type="journal article" date="2010" name="Sci. Signal.">
        <title>Quantitative phosphoproteomics reveals widespread full phosphorylation site occupancy during mitosis.</title>
        <authorList>
            <person name="Olsen J.V."/>
            <person name="Vermeulen M."/>
            <person name="Santamaria A."/>
            <person name="Kumar C."/>
            <person name="Miller M.L."/>
            <person name="Jensen L.J."/>
            <person name="Gnad F."/>
            <person name="Cox J."/>
            <person name="Jensen T.S."/>
            <person name="Nigg E.A."/>
            <person name="Brunak S."/>
            <person name="Mann M."/>
        </authorList>
    </citation>
    <scope>PHOSPHORYLATION [LARGE SCALE ANALYSIS] AT SER-541</scope>
    <scope>IDENTIFICATION BY MASS SPECTROMETRY [LARGE SCALE ANALYSIS]</scope>
    <source>
        <tissue>Cervix carcinoma</tissue>
    </source>
</reference>
<reference key="13">
    <citation type="journal article" date="2011" name="BMC Syst. Biol.">
        <title>Initial characterization of the human central proteome.</title>
        <authorList>
            <person name="Burkard T.R."/>
            <person name="Planyavsky M."/>
            <person name="Kaupe I."/>
            <person name="Breitwieser F.P."/>
            <person name="Buerckstuemmer T."/>
            <person name="Bennett K.L."/>
            <person name="Superti-Furga G."/>
            <person name="Colinge J."/>
        </authorList>
    </citation>
    <scope>IDENTIFICATION BY MASS SPECTROMETRY [LARGE SCALE ANALYSIS]</scope>
</reference>
<reference key="14">
    <citation type="journal article" date="2013" name="J. Proteome Res.">
        <title>Toward a comprehensive characterization of a human cancer cell phosphoproteome.</title>
        <authorList>
            <person name="Zhou H."/>
            <person name="Di Palma S."/>
            <person name="Preisinger C."/>
            <person name="Peng M."/>
            <person name="Polat A.N."/>
            <person name="Heck A.J."/>
            <person name="Mohammed S."/>
        </authorList>
    </citation>
    <scope>PHOSPHORYLATION [LARGE SCALE ANALYSIS] AT SER-66; SER-543 AND SER-921</scope>
    <scope>IDENTIFICATION BY MASS SPECTROMETRY [LARGE SCALE ANALYSIS]</scope>
    <source>
        <tissue>Cervix carcinoma</tissue>
        <tissue>Erythroleukemia</tissue>
    </source>
</reference>
<reference key="15">
    <citation type="journal article" date="2014" name="J. Proteomics">
        <title>An enzyme assisted RP-RPLC approach for in-depth analysis of human liver phosphoproteome.</title>
        <authorList>
            <person name="Bian Y."/>
            <person name="Song C."/>
            <person name="Cheng K."/>
            <person name="Dong M."/>
            <person name="Wang F."/>
            <person name="Huang J."/>
            <person name="Sun D."/>
            <person name="Wang L."/>
            <person name="Ye M."/>
            <person name="Zou H."/>
        </authorList>
    </citation>
    <scope>PHOSPHORYLATION [LARGE SCALE ANALYSIS] AT SER-22 (ISOFORMS 4 AND 5)</scope>
    <scope>IDENTIFICATION BY MASS SPECTROMETRY [LARGE SCALE ANALYSIS]</scope>
    <source>
        <tissue>Liver</tissue>
    </source>
</reference>
<reference key="16">
    <citation type="journal article" date="2014" name="Proc. Natl. Acad. Sci. U.S.A.">
        <title>Mapping of SUMO sites and analysis of SUMOylation changes induced by external stimuli.</title>
        <authorList>
            <person name="Impens F."/>
            <person name="Radoshevich L."/>
            <person name="Cossart P."/>
            <person name="Ribet D."/>
        </authorList>
    </citation>
    <scope>SUMOYLATION [LARGE SCALE ANALYSIS] AT LYS-628</scope>
    <scope>IDENTIFICATION BY MASS SPECTROMETRY [LARGE SCALE ANALYSIS]</scope>
</reference>
<reference key="17">
    <citation type="journal article" date="2011" name="Nature">
        <title>Exome sequencing identifies frequent mutation of the SWI/SNF complex gene PBRM1 in renal carcinoma.</title>
        <authorList>
            <person name="Varela I."/>
            <person name="Tarpey P."/>
            <person name="Raine K."/>
            <person name="Huang D."/>
            <person name="Ong C.K."/>
            <person name="Stephens P."/>
            <person name="Davies H."/>
            <person name="Jones D."/>
            <person name="Lin M.L."/>
            <person name="Teague J."/>
            <person name="Bignell G."/>
            <person name="Butler A."/>
            <person name="Cho J."/>
            <person name="Dalgliesh G.L."/>
            <person name="Galappaththige D."/>
            <person name="Greenman C."/>
            <person name="Hardy C."/>
            <person name="Jia M."/>
            <person name="Latimer C."/>
            <person name="Lau K.W."/>
            <person name="Marshall J."/>
            <person name="McLaren S."/>
            <person name="Menzies A."/>
            <person name="Mudie L."/>
            <person name="Stebbings L."/>
            <person name="Largaespada D.A."/>
            <person name="Wessels L.F.A."/>
            <person name="Richard S."/>
            <person name="Kahnoski R.J."/>
            <person name="Anema J."/>
            <person name="Tuveson D.A."/>
            <person name="Perez-Mancera P.A."/>
            <person name="Mustonen V."/>
            <person name="Fischer A."/>
            <person name="Adams D.J."/>
            <person name="Rust A."/>
            <person name="Chan-On W."/>
            <person name="Subimerb C."/>
            <person name="Dykema K."/>
            <person name="Furge K."/>
            <person name="Campbell P.J."/>
            <person name="Teh B.T."/>
            <person name="Stratton M.R."/>
            <person name="Futreal P.A."/>
        </authorList>
    </citation>
    <scope>VARIANT GLY-390</scope>
</reference>
<feature type="chain" id="PRO_0000126628" description="Myocardin-related transcription factor B">
    <location>
        <begin position="1"/>
        <end position="1088"/>
    </location>
</feature>
<feature type="repeat" description="RPEL 1">
    <location>
        <begin position="40"/>
        <end position="65"/>
    </location>
</feature>
<feature type="repeat" description="RPEL 2">
    <location>
        <begin position="84"/>
        <end position="109"/>
    </location>
</feature>
<feature type="repeat" description="RPEL 3">
    <location>
        <begin position="128"/>
        <end position="153"/>
    </location>
</feature>
<feature type="domain" description="SAP" evidence="3">
    <location>
        <begin position="389"/>
        <end position="423"/>
    </location>
</feature>
<feature type="region of interest" description="Disordered" evidence="4">
    <location>
        <begin position="165"/>
        <end position="310"/>
    </location>
</feature>
<feature type="region of interest" description="Disordered" evidence="4">
    <location>
        <begin position="349"/>
        <end position="389"/>
    </location>
</feature>
<feature type="region of interest" description="Disordered" evidence="4">
    <location>
        <begin position="472"/>
        <end position="508"/>
    </location>
</feature>
<feature type="region of interest" description="Disordered" evidence="4">
    <location>
        <begin position="528"/>
        <end position="553"/>
    </location>
</feature>
<feature type="region of interest" description="Required for interaction with itself and with MRTFA">
    <location>
        <begin position="563"/>
        <end position="591"/>
    </location>
</feature>
<feature type="region of interest" description="Disordered" evidence="4">
    <location>
        <begin position="595"/>
        <end position="655"/>
    </location>
</feature>
<feature type="region of interest" description="Disordered" evidence="4">
    <location>
        <begin position="829"/>
        <end position="886"/>
    </location>
</feature>
<feature type="coiled-coil region" evidence="2">
    <location>
        <begin position="545"/>
        <end position="601"/>
    </location>
</feature>
<feature type="compositionally biased region" description="Low complexity" evidence="4">
    <location>
        <begin position="197"/>
        <end position="213"/>
    </location>
</feature>
<feature type="compositionally biased region" description="Polar residues" evidence="4">
    <location>
        <begin position="214"/>
        <end position="226"/>
    </location>
</feature>
<feature type="compositionally biased region" description="Pro residues" evidence="4">
    <location>
        <begin position="238"/>
        <end position="248"/>
    </location>
</feature>
<feature type="compositionally biased region" description="Basic and acidic residues" evidence="4">
    <location>
        <begin position="272"/>
        <end position="287"/>
    </location>
</feature>
<feature type="compositionally biased region" description="Low complexity" evidence="4">
    <location>
        <begin position="355"/>
        <end position="366"/>
    </location>
</feature>
<feature type="compositionally biased region" description="Polar residues" evidence="4">
    <location>
        <begin position="367"/>
        <end position="378"/>
    </location>
</feature>
<feature type="compositionally biased region" description="Polar residues" evidence="4">
    <location>
        <begin position="528"/>
        <end position="540"/>
    </location>
</feature>
<feature type="compositionally biased region" description="Low complexity" evidence="4">
    <location>
        <begin position="541"/>
        <end position="550"/>
    </location>
</feature>
<feature type="compositionally biased region" description="Polar residues" evidence="4">
    <location>
        <begin position="829"/>
        <end position="838"/>
    </location>
</feature>
<feature type="compositionally biased region" description="Basic and acidic residues" evidence="4">
    <location>
        <begin position="867"/>
        <end position="879"/>
    </location>
</feature>
<feature type="site" description="Breakpoint for translocation to form ZFTA-MRTFB fusion protein">
    <location>
        <position position="394"/>
    </location>
</feature>
<feature type="modified residue" description="Phosphoserine" evidence="13 15">
    <location>
        <position position="66"/>
    </location>
</feature>
<feature type="modified residue" description="Phosphothreonine" evidence="13">
    <location>
        <position position="367"/>
    </location>
</feature>
<feature type="modified residue" description="Phosphothreonine" evidence="13">
    <location>
        <position position="370"/>
    </location>
</feature>
<feature type="modified residue" description="Phosphoserine" evidence="14">
    <location>
        <position position="541"/>
    </location>
</feature>
<feature type="modified residue" description="Phosphoserine" evidence="15">
    <location>
        <position position="543"/>
    </location>
</feature>
<feature type="modified residue" description="Phosphoserine" evidence="13 15">
    <location>
        <position position="921"/>
    </location>
</feature>
<feature type="cross-link" description="Glycyl lysine isopeptide (Lys-Gly) (interchain with G-Cter in SUMO1)" evidence="17">
    <location>
        <position position="628"/>
    </location>
</feature>
<feature type="splice variant" id="VSP_007653" description="In isoform 2." evidence="10">
    <original>MIDSSKKQQQGFPEILTAGDFEPLKEKECLEGSNQKSLKEV</original>
    <variation>M</variation>
    <location>
        <begin position="1"/>
        <end position="41"/>
    </location>
</feature>
<feature type="splice variant" id="VSP_013355" description="In isoform 4 and isoform 5." evidence="8 9 10">
    <original>MIDSSKKQQQGFPEILTAGDFEPLKEKECLEGSNQKSLKE</original>
    <variation>MDHTGAIDTEDEVGPLAHLAPSPQSEAVAHEFQELSLQSSQNLPPLNERKN</variation>
    <location>
        <begin position="1"/>
        <end position="40"/>
    </location>
</feature>
<feature type="splice variant" id="VSP_007656" description="In isoform 3." evidence="9">
    <original>PLNDKNSNSGNSALNNATPNTPRQNTSTPVRKPGPLPSSLDDLKVSELKTELKLRGLPVSGTKPDLIERLKPYQEVNSSGLAAGGIVAVSSSAIVTSNPEVTVALPVTTLHN</original>
    <variation>YGGAHAILNAGFSVVFMRNYKLPKVECCHLFVLSNDFHFFVIRAYHTVSEVHMVRVACIPFQFLSSKIGSEFLQVRNAFSQLFIQICLLLEHQNSTRCSEKSVSSIIPGINS</variation>
    <location>
        <begin position="350"/>
        <end position="461"/>
    </location>
</feature>
<feature type="splice variant" id="VSP_007654" description="In isoform 2." evidence="10">
    <original>PLNDKNSNSGNSALNNATPNTPRQNTSTPVRKPGPLPSSLDDLKVSELKTELKLRGLPVSGTKPDLIER</original>
    <variation>AYHTVSEVHMVRVACIPFQFLSSKIGSEFLQVRNAFSQLFIQICLLLEHQNSTRCSEKSVSSIIPGINS</variation>
    <location>
        <begin position="350"/>
        <end position="418"/>
    </location>
</feature>
<feature type="splice variant" id="VSP_007655" description="In isoform 2." evidence="10">
    <location>
        <begin position="419"/>
        <end position="1088"/>
    </location>
</feature>
<feature type="splice variant" id="VSP_007657" description="In isoform 3." evidence="9">
    <location>
        <begin position="462"/>
        <end position="1088"/>
    </location>
</feature>
<feature type="splice variant" id="VSP_013356" description="In isoform 4." evidence="8">
    <location>
        <begin position="689"/>
        <end position="738"/>
    </location>
</feature>
<feature type="sequence variant" id="VAR_064732" description="Found in a renal cell carcinoma sample; somatic mutation." evidence="7">
    <original>D</original>
    <variation>G</variation>
    <location>
        <position position="390"/>
    </location>
</feature>
<feature type="sequence conflict" description="In Ref. 2; BAC04200." evidence="11" ref="2">
    <original>K</original>
    <variation>R</variation>
    <location>
        <position position="266"/>
    </location>
</feature>
<feature type="sequence conflict" description="In Ref. 1; AAQ82435." evidence="11" ref="1">
    <original>P</original>
    <variation>A</variation>
    <location>
        <position position="350"/>
    </location>
</feature>
<feature type="sequence conflict" description="In Ref. 8; CAH18657." evidence="11" ref="8">
    <original>E</original>
    <variation>G</variation>
    <location>
        <position position="592"/>
    </location>
</feature>
<feature type="sequence conflict" description="In Ref. 1; AAQ82435." evidence="11" ref="1">
    <original>Q</original>
    <variation>R</variation>
    <location>
        <position position="598"/>
    </location>
</feature>
<feature type="sequence conflict" description="In Ref. 1; AAQ82435." evidence="11" ref="1">
    <original>D</original>
    <variation>G</variation>
    <location>
        <position position="629"/>
    </location>
</feature>
<feature type="modified residue" description="Phosphoserine" evidence="16">
    <location sequence="Q9ULH7-4">
        <position position="22"/>
    </location>
</feature>
<feature type="modified residue" description="Phosphoserine" evidence="16">
    <location sequence="Q9ULH7-5">
        <position position="22"/>
    </location>
</feature>
<accession>Q9ULH7</accession>
<accession>A6ND53</accession>
<accession>B4DGT8</accession>
<accession>Q68CT1</accession>
<accession>Q6UB16</accession>
<accession>Q86WW2</accession>
<accession>Q8N226</accession>
<dbReference type="EMBL" id="AY374297">
    <property type="protein sequence ID" value="AAQ82435.1"/>
    <property type="molecule type" value="mRNA"/>
</dbReference>
<dbReference type="EMBL" id="AK093577">
    <property type="protein sequence ID" value="BAC04200.1"/>
    <property type="molecule type" value="mRNA"/>
</dbReference>
<dbReference type="EMBL" id="AK294765">
    <property type="protein sequence ID" value="BAG57899.1"/>
    <property type="molecule type" value="mRNA"/>
</dbReference>
<dbReference type="EMBL" id="AC012626">
    <property type="status" value="NOT_ANNOTATED_CDS"/>
    <property type="molecule type" value="Genomic_DNA"/>
</dbReference>
<dbReference type="EMBL" id="AC040173">
    <property type="status" value="NOT_ANNOTATED_CDS"/>
    <property type="molecule type" value="Genomic_DNA"/>
</dbReference>
<dbReference type="EMBL" id="AC130650">
    <property type="status" value="NOT_ANNOTATED_CDS"/>
    <property type="molecule type" value="Genomic_DNA"/>
</dbReference>
<dbReference type="EMBL" id="CH471112">
    <property type="protein sequence ID" value="EAW85112.1"/>
    <property type="molecule type" value="Genomic_DNA"/>
</dbReference>
<dbReference type="EMBL" id="BC047761">
    <property type="protein sequence ID" value="AAH47761.1"/>
    <property type="molecule type" value="mRNA"/>
</dbReference>
<dbReference type="EMBL" id="BC136260">
    <property type="protein sequence ID" value="AAI36261.1"/>
    <property type="molecule type" value="mRNA"/>
</dbReference>
<dbReference type="EMBL" id="BC171750">
    <property type="protein sequence ID" value="AAI71750.1"/>
    <property type="molecule type" value="mRNA"/>
</dbReference>
<dbReference type="EMBL" id="AB033069">
    <property type="protein sequence ID" value="BAA86557.2"/>
    <property type="molecule type" value="mRNA"/>
</dbReference>
<dbReference type="EMBL" id="CR749797">
    <property type="protein sequence ID" value="CAH18657.1"/>
    <property type="molecule type" value="mRNA"/>
</dbReference>
<dbReference type="CCDS" id="CCDS32391.1">
    <molecule id="Q9ULH7-4"/>
</dbReference>
<dbReference type="CCDS" id="CCDS76823.1">
    <molecule id="Q9ULH7-5"/>
</dbReference>
<dbReference type="RefSeq" id="NP_001295071.1">
    <molecule id="Q9ULH7-5"/>
    <property type="nucleotide sequence ID" value="NM_001308142.2"/>
</dbReference>
<dbReference type="RefSeq" id="NP_001352340.1">
    <molecule id="Q9ULH7-1"/>
    <property type="nucleotide sequence ID" value="NM_001365411.2"/>
</dbReference>
<dbReference type="RefSeq" id="NP_054767.3">
    <molecule id="Q9ULH7-4"/>
    <property type="nucleotide sequence ID" value="NM_014048.4"/>
</dbReference>
<dbReference type="RefSeq" id="XP_005255509.1">
    <molecule id="Q9ULH7-5"/>
    <property type="nucleotide sequence ID" value="XM_005255452.4"/>
</dbReference>
<dbReference type="RefSeq" id="XP_005255510.1">
    <property type="nucleotide sequence ID" value="XM_005255453.4"/>
</dbReference>
<dbReference type="RefSeq" id="XP_005255512.1">
    <property type="nucleotide sequence ID" value="XM_005255455.3"/>
</dbReference>
<dbReference type="RefSeq" id="XP_006720971.1">
    <property type="nucleotide sequence ID" value="XM_006720908.3"/>
</dbReference>
<dbReference type="RefSeq" id="XP_006720972.1">
    <molecule id="Q9ULH7-5"/>
    <property type="nucleotide sequence ID" value="XM_006720909.5"/>
</dbReference>
<dbReference type="RefSeq" id="XP_006720977.1">
    <molecule id="Q9ULH7-4"/>
    <property type="nucleotide sequence ID" value="XM_006720914.3"/>
</dbReference>
<dbReference type="RefSeq" id="XP_011520870.1">
    <molecule id="Q9ULH7-5"/>
    <property type="nucleotide sequence ID" value="XM_011522568.3"/>
</dbReference>
<dbReference type="RefSeq" id="XP_016878990.1">
    <molecule id="Q9ULH7-5"/>
    <property type="nucleotide sequence ID" value="XM_017023501.3"/>
</dbReference>
<dbReference type="RefSeq" id="XP_016878991.1">
    <molecule id="Q9ULH7-5"/>
    <property type="nucleotide sequence ID" value="XM_017023502.1"/>
</dbReference>
<dbReference type="RefSeq" id="XP_047290346.1">
    <molecule id="Q9ULH7-5"/>
    <property type="nucleotide sequence ID" value="XM_047434390.1"/>
</dbReference>
<dbReference type="RefSeq" id="XP_047290347.1">
    <molecule id="Q9ULH7-5"/>
    <property type="nucleotide sequence ID" value="XM_047434391.1"/>
</dbReference>
<dbReference type="RefSeq" id="XP_047290348.1">
    <molecule id="Q9ULH7-5"/>
    <property type="nucleotide sequence ID" value="XM_047434392.1"/>
</dbReference>
<dbReference type="RefSeq" id="XP_047290349.1">
    <molecule id="Q9ULH7-5"/>
    <property type="nucleotide sequence ID" value="XM_047434393.1"/>
</dbReference>
<dbReference type="RefSeq" id="XP_047290350.1">
    <molecule id="Q9ULH7-5"/>
    <property type="nucleotide sequence ID" value="XM_047434394.1"/>
</dbReference>
<dbReference type="RefSeq" id="XP_047290351.1">
    <molecule id="Q9ULH7-5"/>
    <property type="nucleotide sequence ID" value="XM_047434395.1"/>
</dbReference>
<dbReference type="RefSeq" id="XP_047290352.1">
    <molecule id="Q9ULH7-5"/>
    <property type="nucleotide sequence ID" value="XM_047434396.1"/>
</dbReference>
<dbReference type="RefSeq" id="XP_047290353.1">
    <molecule id="Q9ULH7-5"/>
    <property type="nucleotide sequence ID" value="XM_047434397.1"/>
</dbReference>
<dbReference type="RefSeq" id="XP_047290358.1">
    <molecule id="Q9ULH7-4"/>
    <property type="nucleotide sequence ID" value="XM_047434402.1"/>
</dbReference>
<dbReference type="RefSeq" id="XP_047290359.1">
    <molecule id="Q9ULH7-4"/>
    <property type="nucleotide sequence ID" value="XM_047434403.1"/>
</dbReference>
<dbReference type="RefSeq" id="XP_054169509.1">
    <molecule id="Q9ULH7-5"/>
    <property type="nucleotide sequence ID" value="XM_054313534.1"/>
</dbReference>
<dbReference type="RefSeq" id="XP_054169510.1">
    <molecule id="Q9ULH7-5"/>
    <property type="nucleotide sequence ID" value="XM_054313535.1"/>
</dbReference>
<dbReference type="RefSeq" id="XP_054169511.1">
    <molecule id="Q9ULH7-5"/>
    <property type="nucleotide sequence ID" value="XM_054313536.1"/>
</dbReference>
<dbReference type="RefSeq" id="XP_054169512.1">
    <molecule id="Q9ULH7-5"/>
    <property type="nucleotide sequence ID" value="XM_054313537.1"/>
</dbReference>
<dbReference type="RefSeq" id="XP_054169513.1">
    <molecule id="Q9ULH7-5"/>
    <property type="nucleotide sequence ID" value="XM_054313538.1"/>
</dbReference>
<dbReference type="RefSeq" id="XP_054169514.1">
    <molecule id="Q9ULH7-5"/>
    <property type="nucleotide sequence ID" value="XM_054313539.1"/>
</dbReference>
<dbReference type="RefSeq" id="XP_054169515.1">
    <molecule id="Q9ULH7-5"/>
    <property type="nucleotide sequence ID" value="XM_054313540.1"/>
</dbReference>
<dbReference type="RefSeq" id="XP_054169516.1">
    <molecule id="Q9ULH7-5"/>
    <property type="nucleotide sequence ID" value="XM_054313541.1"/>
</dbReference>
<dbReference type="RefSeq" id="XP_054169517.1">
    <molecule id="Q9ULH7-5"/>
    <property type="nucleotide sequence ID" value="XM_054313542.1"/>
</dbReference>
<dbReference type="RefSeq" id="XP_054169518.1">
    <molecule id="Q9ULH7-5"/>
    <property type="nucleotide sequence ID" value="XM_054313543.1"/>
</dbReference>
<dbReference type="RefSeq" id="XP_054169519.1">
    <molecule id="Q9ULH7-5"/>
    <property type="nucleotide sequence ID" value="XM_054313544.1"/>
</dbReference>
<dbReference type="RefSeq" id="XP_054169520.1">
    <molecule id="Q9ULH7-5"/>
    <property type="nucleotide sequence ID" value="XM_054313545.1"/>
</dbReference>
<dbReference type="RefSeq" id="XP_054169521.1">
    <molecule id="Q9ULH7-5"/>
    <property type="nucleotide sequence ID" value="XM_054313546.1"/>
</dbReference>
<dbReference type="RefSeq" id="XP_054169527.1">
    <molecule id="Q9ULH7-4"/>
    <property type="nucleotide sequence ID" value="XM_054313552.1"/>
</dbReference>
<dbReference type="RefSeq" id="XP_054169528.1">
    <molecule id="Q9ULH7-4"/>
    <property type="nucleotide sequence ID" value="XM_054313553.1"/>
</dbReference>
<dbReference type="RefSeq" id="XP_054169529.1">
    <molecule id="Q9ULH7-4"/>
    <property type="nucleotide sequence ID" value="XM_054313554.1"/>
</dbReference>
<dbReference type="SMR" id="Q9ULH7"/>
<dbReference type="BioGRID" id="121563">
    <property type="interactions" value="57"/>
</dbReference>
<dbReference type="ELM" id="Q9ULH7"/>
<dbReference type="FunCoup" id="Q9ULH7">
    <property type="interactions" value="1326"/>
</dbReference>
<dbReference type="IntAct" id="Q9ULH7">
    <property type="interactions" value="29"/>
</dbReference>
<dbReference type="MINT" id="Q9ULH7"/>
<dbReference type="STRING" id="9606.ENSP00000459626"/>
<dbReference type="GlyCosmos" id="Q9ULH7">
    <property type="glycosylation" value="1 site, 1 glycan"/>
</dbReference>
<dbReference type="GlyGen" id="Q9ULH7">
    <property type="glycosylation" value="12 sites, 1 O-linked glycan (11 sites)"/>
</dbReference>
<dbReference type="iPTMnet" id="Q9ULH7"/>
<dbReference type="MetOSite" id="Q9ULH7"/>
<dbReference type="PhosphoSitePlus" id="Q9ULH7"/>
<dbReference type="BioMuta" id="MKL2"/>
<dbReference type="DMDM" id="32363203"/>
<dbReference type="jPOST" id="Q9ULH7"/>
<dbReference type="MassIVE" id="Q9ULH7"/>
<dbReference type="PaxDb" id="9606-ENSP00000339086"/>
<dbReference type="PeptideAtlas" id="Q9ULH7"/>
<dbReference type="ProteomicsDB" id="4158"/>
<dbReference type="ProteomicsDB" id="85028">
    <molecule id="Q9ULH7-1"/>
</dbReference>
<dbReference type="ProteomicsDB" id="85029">
    <molecule id="Q9ULH7-2"/>
</dbReference>
<dbReference type="ProteomicsDB" id="85030">
    <molecule id="Q9ULH7-3"/>
</dbReference>
<dbReference type="ProteomicsDB" id="85031">
    <molecule id="Q9ULH7-4"/>
</dbReference>
<dbReference type="Pumba" id="Q9ULH7"/>
<dbReference type="Antibodypedia" id="1832">
    <property type="antibodies" value="112 antibodies from 24 providers"/>
</dbReference>
<dbReference type="DNASU" id="57496"/>
<dbReference type="Ensembl" id="ENST00000318282.9">
    <molecule id="Q9ULH7-4"/>
    <property type="protein sequence ID" value="ENSP00000339086.4"/>
    <property type="gene ID" value="ENSG00000186260.17"/>
</dbReference>
<dbReference type="Ensembl" id="ENST00000571589.6">
    <molecule id="Q9ULH7-5"/>
    <property type="protein sequence ID" value="ENSP00000459626.2"/>
    <property type="gene ID" value="ENSG00000186260.17"/>
</dbReference>
<dbReference type="Ensembl" id="ENST00000573051.1">
    <molecule id="Q9ULH7-2"/>
    <property type="protein sequence ID" value="ENSP00000460589.1"/>
    <property type="gene ID" value="ENSG00000186260.17"/>
</dbReference>
<dbReference type="Ensembl" id="ENST00000574045.5">
    <molecule id="Q9ULH7-4"/>
    <property type="protein sequence ID" value="ENSP00000459205.1"/>
    <property type="gene ID" value="ENSG00000186260.17"/>
</dbReference>
<dbReference type="GeneID" id="57496"/>
<dbReference type="KEGG" id="hsa:57496"/>
<dbReference type="MANE-Select" id="ENST00000571589.6">
    <molecule id="Q9ULH7-5"/>
    <property type="protein sequence ID" value="ENSP00000459626.2"/>
    <property type="RefSeq nucleotide sequence ID" value="NM_001308142.2"/>
    <property type="RefSeq protein sequence ID" value="NP_001295071.1"/>
</dbReference>
<dbReference type="UCSC" id="uc002dcg.4">
    <molecule id="Q9ULH7-1"/>
    <property type="organism name" value="human"/>
</dbReference>
<dbReference type="AGR" id="HGNC:29819"/>
<dbReference type="CTD" id="57496"/>
<dbReference type="DisGeNET" id="57496"/>
<dbReference type="GeneCards" id="MRTFB"/>
<dbReference type="HGNC" id="HGNC:29819">
    <property type="gene designation" value="MRTFB"/>
</dbReference>
<dbReference type="HPA" id="ENSG00000186260">
    <property type="expression patterns" value="Low tissue specificity"/>
</dbReference>
<dbReference type="MalaCards" id="MRTFB"/>
<dbReference type="MIM" id="609463">
    <property type="type" value="gene"/>
</dbReference>
<dbReference type="neXtProt" id="NX_Q9ULH7"/>
<dbReference type="OpenTargets" id="ENSG00000186260"/>
<dbReference type="PharmGKB" id="PA134981329"/>
<dbReference type="VEuPathDB" id="HostDB:ENSG00000186260"/>
<dbReference type="eggNOG" id="ENOG502QU1Z">
    <property type="taxonomic scope" value="Eukaryota"/>
</dbReference>
<dbReference type="GeneTree" id="ENSGT00950000182979"/>
<dbReference type="HOGENOM" id="CLU_007042_0_0_1"/>
<dbReference type="InParanoid" id="Q9ULH7"/>
<dbReference type="OMA" id="DTFTQHV"/>
<dbReference type="OrthoDB" id="197676at2759"/>
<dbReference type="PAN-GO" id="Q9ULH7">
    <property type="GO annotations" value="4 GO annotations based on evolutionary models"/>
</dbReference>
<dbReference type="PhylomeDB" id="Q9ULH7"/>
<dbReference type="TreeFam" id="TF326024"/>
<dbReference type="PathwayCommons" id="Q9ULH7"/>
<dbReference type="SignaLink" id="Q9ULH7"/>
<dbReference type="SIGNOR" id="Q9ULH7"/>
<dbReference type="BioGRID-ORCS" id="57496">
    <property type="hits" value="7 hits in 1161 CRISPR screens"/>
</dbReference>
<dbReference type="ChiTaRS" id="MKL2">
    <property type="organism name" value="human"/>
</dbReference>
<dbReference type="GeneWiki" id="MKL2"/>
<dbReference type="GenomeRNAi" id="57496"/>
<dbReference type="Pharos" id="Q9ULH7">
    <property type="development level" value="Tbio"/>
</dbReference>
<dbReference type="PRO" id="PR:Q9ULH7"/>
<dbReference type="Proteomes" id="UP000005640">
    <property type="component" value="Chromosome 16"/>
</dbReference>
<dbReference type="RNAct" id="Q9ULH7">
    <property type="molecule type" value="protein"/>
</dbReference>
<dbReference type="Bgee" id="ENSG00000186260">
    <property type="expression patterns" value="Expressed in Brodmann (1909) area 23 and 209 other cell types or tissues"/>
</dbReference>
<dbReference type="ExpressionAtlas" id="Q9ULH7">
    <property type="expression patterns" value="baseline and differential"/>
</dbReference>
<dbReference type="GO" id="GO:0098978">
    <property type="term" value="C:glutamatergic synapse"/>
    <property type="evidence" value="ECO:0007669"/>
    <property type="project" value="Ensembl"/>
</dbReference>
<dbReference type="GO" id="GO:0005634">
    <property type="term" value="C:nucleus"/>
    <property type="evidence" value="ECO:0000318"/>
    <property type="project" value="GO_Central"/>
</dbReference>
<dbReference type="GO" id="GO:0098794">
    <property type="term" value="C:postsynapse"/>
    <property type="evidence" value="ECO:0007669"/>
    <property type="project" value="Ensembl"/>
</dbReference>
<dbReference type="GO" id="GO:0098793">
    <property type="term" value="C:presynapse"/>
    <property type="evidence" value="ECO:0007669"/>
    <property type="project" value="Ensembl"/>
</dbReference>
<dbReference type="GO" id="GO:0045296">
    <property type="term" value="F:cadherin binding"/>
    <property type="evidence" value="ECO:0007005"/>
    <property type="project" value="BHF-UCL"/>
</dbReference>
<dbReference type="GO" id="GO:0003713">
    <property type="term" value="F:transcription coactivator activity"/>
    <property type="evidence" value="ECO:0000314"/>
    <property type="project" value="UniProtKB"/>
</dbReference>
<dbReference type="GO" id="GO:0007517">
    <property type="term" value="P:muscle organ development"/>
    <property type="evidence" value="ECO:0007669"/>
    <property type="project" value="UniProtKB-KW"/>
</dbReference>
<dbReference type="GO" id="GO:1902895">
    <property type="term" value="P:positive regulation of miRNA transcription"/>
    <property type="evidence" value="ECO:0000316"/>
    <property type="project" value="ARUK-UCL"/>
</dbReference>
<dbReference type="GO" id="GO:0045844">
    <property type="term" value="P:positive regulation of striated muscle tissue development"/>
    <property type="evidence" value="ECO:0000314"/>
    <property type="project" value="UniProtKB"/>
</dbReference>
<dbReference type="GO" id="GO:0045944">
    <property type="term" value="P:positive regulation of transcription by RNA polymerase II"/>
    <property type="evidence" value="ECO:0000314"/>
    <property type="project" value="UniProtKB"/>
</dbReference>
<dbReference type="GO" id="GO:0099159">
    <property type="term" value="P:regulation of modification of postsynaptic structure"/>
    <property type="evidence" value="ECO:0007669"/>
    <property type="project" value="Ensembl"/>
</dbReference>
<dbReference type="GO" id="GO:0051145">
    <property type="term" value="P:smooth muscle cell differentiation"/>
    <property type="evidence" value="ECO:0000318"/>
    <property type="project" value="GO_Central"/>
</dbReference>
<dbReference type="FunFam" id="1.10.720.30:FF:000002">
    <property type="entry name" value="Myocardin related transcription factor A"/>
    <property type="match status" value="1"/>
</dbReference>
<dbReference type="Gene3D" id="6.10.140.2040">
    <property type="match status" value="1"/>
</dbReference>
<dbReference type="Gene3D" id="6.10.150.10">
    <property type="match status" value="1"/>
</dbReference>
<dbReference type="Gene3D" id="1.10.720.30">
    <property type="entry name" value="SAP domain"/>
    <property type="match status" value="1"/>
</dbReference>
<dbReference type="InterPro" id="IPR043451">
    <property type="entry name" value="Myocardin-like"/>
</dbReference>
<dbReference type="InterPro" id="IPR004018">
    <property type="entry name" value="RPEL_repeat"/>
</dbReference>
<dbReference type="InterPro" id="IPR003034">
    <property type="entry name" value="SAP_dom"/>
</dbReference>
<dbReference type="InterPro" id="IPR036361">
    <property type="entry name" value="SAP_dom_sf"/>
</dbReference>
<dbReference type="PANTHER" id="PTHR22793:SF5">
    <property type="entry name" value="MYOCARDIN-RELATED TRANSCRIPTION FACTOR B"/>
    <property type="match status" value="1"/>
</dbReference>
<dbReference type="PANTHER" id="PTHR22793">
    <property type="entry name" value="MYOCARDIN-RELATED TRANSCRIPTION FACTOR-RELATED"/>
    <property type="match status" value="1"/>
</dbReference>
<dbReference type="Pfam" id="PF02755">
    <property type="entry name" value="RPEL"/>
    <property type="match status" value="2"/>
</dbReference>
<dbReference type="Pfam" id="PF02037">
    <property type="entry name" value="SAP"/>
    <property type="match status" value="1"/>
</dbReference>
<dbReference type="SMART" id="SM00707">
    <property type="entry name" value="RPEL"/>
    <property type="match status" value="3"/>
</dbReference>
<dbReference type="SMART" id="SM00513">
    <property type="entry name" value="SAP"/>
    <property type="match status" value="1"/>
</dbReference>
<dbReference type="SUPFAM" id="SSF68906">
    <property type="entry name" value="SAP domain"/>
    <property type="match status" value="1"/>
</dbReference>
<dbReference type="PROSITE" id="PS51073">
    <property type="entry name" value="RPEL"/>
    <property type="match status" value="3"/>
</dbReference>
<dbReference type="PROSITE" id="PS50800">
    <property type="entry name" value="SAP"/>
    <property type="match status" value="1"/>
</dbReference>
<evidence type="ECO:0000250" key="1"/>
<evidence type="ECO:0000255" key="2"/>
<evidence type="ECO:0000255" key="3">
    <source>
        <dbReference type="PROSITE-ProRule" id="PRU00186"/>
    </source>
</evidence>
<evidence type="ECO:0000256" key="4">
    <source>
        <dbReference type="SAM" id="MobiDB-lite"/>
    </source>
</evidence>
<evidence type="ECO:0000269" key="5">
    <source>
    </source>
</evidence>
<evidence type="ECO:0000269" key="6">
    <source>
    </source>
</evidence>
<evidence type="ECO:0000269" key="7">
    <source>
    </source>
</evidence>
<evidence type="ECO:0000303" key="8">
    <source>
    </source>
</evidence>
<evidence type="ECO:0000303" key="9">
    <source>
    </source>
</evidence>
<evidence type="ECO:0000303" key="10">
    <source>
    </source>
</evidence>
<evidence type="ECO:0000305" key="11"/>
<evidence type="ECO:0000312" key="12">
    <source>
        <dbReference type="HGNC" id="HGNC:29819"/>
    </source>
</evidence>
<evidence type="ECO:0007744" key="13">
    <source>
    </source>
</evidence>
<evidence type="ECO:0007744" key="14">
    <source>
    </source>
</evidence>
<evidence type="ECO:0007744" key="15">
    <source>
    </source>
</evidence>
<evidence type="ECO:0007744" key="16">
    <source>
    </source>
</evidence>
<evidence type="ECO:0007744" key="17">
    <source>
    </source>
</evidence>
<comment type="function">
    <text evidence="5">Acts as a transcriptional coactivator of serum response factor (SRF). Required for skeletal myogenic differentiation.</text>
</comment>
<comment type="subunit">
    <text evidence="5">Interacts with MRTFA and SRF.</text>
</comment>
<comment type="interaction">
    <interactant intactId="EBI-493007">
        <id>Q9ULH7</id>
    </interactant>
    <interactant intactId="EBI-493034">
        <id>P11831</id>
        <label>SRF</label>
    </interactant>
    <organismsDiffer>false</organismsDiffer>
    <experiments>3</experiments>
</comment>
<comment type="subcellular location">
    <subcellularLocation>
        <location evidence="1">Nucleus</location>
    </subcellularLocation>
</comment>
<comment type="alternative products">
    <event type="alternative splicing"/>
    <isoform>
        <id>Q9ULH7-1</id>
        <name>1</name>
        <sequence type="displayed"/>
    </isoform>
    <isoform>
        <id>Q9ULH7-2</id>
        <name>2</name>
        <sequence type="described" ref="VSP_007653 VSP_007654 VSP_007655"/>
    </isoform>
    <isoform>
        <id>Q9ULH7-3</id>
        <name>3</name>
        <sequence type="described" ref="VSP_007656 VSP_007657"/>
    </isoform>
    <isoform>
        <id>Q9ULH7-4</id>
        <name>4</name>
        <sequence type="described" ref="VSP_013355 VSP_013356"/>
    </isoform>
    <isoform>
        <id>Q9ULH7-5</id>
        <name>5</name>
        <sequence type="described" ref="VSP_013355"/>
    </isoform>
</comment>
<comment type="domain">
    <text evidence="1">The N-terminal region is required for nuclear localization and the C-terminal region mediates transcriptional activity.</text>
</comment>
<comment type="PTM">
    <text evidence="1">O-glycosylated.</text>
</comment>
<comment type="disease">
    <text evidence="6">A chromosomal aberration involving ZFTA is found in 3 chondroid lipomas. Translocation t(11;16)(q13;p13) with ZFTA produces a ZFTA-MRTFB fusion protein (PubMed:20607705).</text>
</comment>
<organism>
    <name type="scientific">Homo sapiens</name>
    <name type="common">Human</name>
    <dbReference type="NCBI Taxonomy" id="9606"/>
    <lineage>
        <taxon>Eukaryota</taxon>
        <taxon>Metazoa</taxon>
        <taxon>Chordata</taxon>
        <taxon>Craniata</taxon>
        <taxon>Vertebrata</taxon>
        <taxon>Euteleostomi</taxon>
        <taxon>Mammalia</taxon>
        <taxon>Eutheria</taxon>
        <taxon>Euarchontoglires</taxon>
        <taxon>Primates</taxon>
        <taxon>Haplorrhini</taxon>
        <taxon>Catarrhini</taxon>
        <taxon>Hominidae</taxon>
        <taxon>Homo</taxon>
    </lineage>
</organism>